<feature type="chain" id="PRO_0000234900" description="Large ribosomal subunit protein uL10">
    <location>
        <begin position="1"/>
        <end position="175"/>
    </location>
</feature>
<comment type="function">
    <text evidence="1">Forms part of the ribosomal stalk, playing a central role in the interaction of the ribosome with GTP-bound translation factors.</text>
</comment>
<comment type="subunit">
    <text evidence="1">Part of the ribosomal stalk of the 50S ribosomal subunit. The N-terminus interacts with L11 and the large rRNA to form the base of the stalk. The C-terminus forms an elongated spine to which L12 dimers bind in a sequential fashion forming a multimeric L10(L12)X complex.</text>
</comment>
<comment type="similarity">
    <text evidence="1">Belongs to the universal ribosomal protein uL10 family.</text>
</comment>
<keyword id="KW-1185">Reference proteome</keyword>
<keyword id="KW-0687">Ribonucleoprotein</keyword>
<keyword id="KW-0689">Ribosomal protein</keyword>
<keyword id="KW-0694">RNA-binding</keyword>
<keyword id="KW-0699">rRNA-binding</keyword>
<accession>Q31QK5</accession>
<reference key="1">
    <citation type="submission" date="2005-08" db="EMBL/GenBank/DDBJ databases">
        <title>Complete sequence of chromosome 1 of Synechococcus elongatus PCC 7942.</title>
        <authorList>
            <consortium name="US DOE Joint Genome Institute"/>
            <person name="Copeland A."/>
            <person name="Lucas S."/>
            <person name="Lapidus A."/>
            <person name="Barry K."/>
            <person name="Detter J.C."/>
            <person name="Glavina T."/>
            <person name="Hammon N."/>
            <person name="Israni S."/>
            <person name="Pitluck S."/>
            <person name="Schmutz J."/>
            <person name="Larimer F."/>
            <person name="Land M."/>
            <person name="Kyrpides N."/>
            <person name="Lykidis A."/>
            <person name="Golden S."/>
            <person name="Richardson P."/>
        </authorList>
    </citation>
    <scope>NUCLEOTIDE SEQUENCE [LARGE SCALE GENOMIC DNA]</scope>
    <source>
        <strain>ATCC 33912 / PCC 7942 / FACHB-805</strain>
    </source>
</reference>
<evidence type="ECO:0000255" key="1">
    <source>
        <dbReference type="HAMAP-Rule" id="MF_00362"/>
    </source>
</evidence>
<evidence type="ECO:0000305" key="2"/>
<gene>
    <name evidence="1" type="primary">rplJ</name>
    <name evidence="1" type="synonym">rpl10</name>
    <name type="ordered locus">Synpcc7942_0632</name>
</gene>
<protein>
    <recommendedName>
        <fullName evidence="1">Large ribosomal subunit protein uL10</fullName>
    </recommendedName>
    <alternativeName>
        <fullName evidence="2">50S ribosomal protein L10</fullName>
    </alternativeName>
</protein>
<dbReference type="EMBL" id="CP000100">
    <property type="protein sequence ID" value="ABB56664.1"/>
    <property type="molecule type" value="Genomic_DNA"/>
</dbReference>
<dbReference type="RefSeq" id="WP_011243205.1">
    <property type="nucleotide sequence ID" value="NZ_JACJTX010000006.1"/>
</dbReference>
<dbReference type="SMR" id="Q31QK5"/>
<dbReference type="STRING" id="1140.Synpcc7942_0632"/>
<dbReference type="PaxDb" id="1140-Synpcc7942_0632"/>
<dbReference type="GeneID" id="72429465"/>
<dbReference type="KEGG" id="syf:Synpcc7942_0632"/>
<dbReference type="eggNOG" id="COG0244">
    <property type="taxonomic scope" value="Bacteria"/>
</dbReference>
<dbReference type="HOGENOM" id="CLU_092227_1_1_3"/>
<dbReference type="OrthoDB" id="9808307at2"/>
<dbReference type="BioCyc" id="SYNEL:SYNPCC7942_0632-MONOMER"/>
<dbReference type="Proteomes" id="UP000889800">
    <property type="component" value="Chromosome"/>
</dbReference>
<dbReference type="GO" id="GO:0015934">
    <property type="term" value="C:large ribosomal subunit"/>
    <property type="evidence" value="ECO:0007669"/>
    <property type="project" value="InterPro"/>
</dbReference>
<dbReference type="GO" id="GO:0070180">
    <property type="term" value="F:large ribosomal subunit rRNA binding"/>
    <property type="evidence" value="ECO:0007669"/>
    <property type="project" value="UniProtKB-UniRule"/>
</dbReference>
<dbReference type="GO" id="GO:0003735">
    <property type="term" value="F:structural constituent of ribosome"/>
    <property type="evidence" value="ECO:0007669"/>
    <property type="project" value="InterPro"/>
</dbReference>
<dbReference type="GO" id="GO:0006412">
    <property type="term" value="P:translation"/>
    <property type="evidence" value="ECO:0007669"/>
    <property type="project" value="UniProtKB-UniRule"/>
</dbReference>
<dbReference type="CDD" id="cd05797">
    <property type="entry name" value="Ribosomal_L10"/>
    <property type="match status" value="1"/>
</dbReference>
<dbReference type="Gene3D" id="3.30.70.1730">
    <property type="match status" value="1"/>
</dbReference>
<dbReference type="Gene3D" id="6.10.250.290">
    <property type="match status" value="1"/>
</dbReference>
<dbReference type="HAMAP" id="MF_00362">
    <property type="entry name" value="Ribosomal_uL10"/>
    <property type="match status" value="1"/>
</dbReference>
<dbReference type="InterPro" id="IPR001790">
    <property type="entry name" value="Ribosomal_uL10"/>
</dbReference>
<dbReference type="InterPro" id="IPR043141">
    <property type="entry name" value="Ribosomal_uL10-like_sf"/>
</dbReference>
<dbReference type="InterPro" id="IPR022973">
    <property type="entry name" value="Ribosomal_uL10_bac"/>
</dbReference>
<dbReference type="InterPro" id="IPR047865">
    <property type="entry name" value="Ribosomal_uL10_bac_type"/>
</dbReference>
<dbReference type="InterPro" id="IPR002363">
    <property type="entry name" value="Ribosomal_uL10_CS_bac"/>
</dbReference>
<dbReference type="NCBIfam" id="NF000955">
    <property type="entry name" value="PRK00099.1-1"/>
    <property type="match status" value="1"/>
</dbReference>
<dbReference type="PANTHER" id="PTHR11560">
    <property type="entry name" value="39S RIBOSOMAL PROTEIN L10, MITOCHONDRIAL"/>
    <property type="match status" value="1"/>
</dbReference>
<dbReference type="Pfam" id="PF00466">
    <property type="entry name" value="Ribosomal_L10"/>
    <property type="match status" value="1"/>
</dbReference>
<dbReference type="SUPFAM" id="SSF160369">
    <property type="entry name" value="Ribosomal protein L10-like"/>
    <property type="match status" value="1"/>
</dbReference>
<dbReference type="PROSITE" id="PS01109">
    <property type="entry name" value="RIBOSOMAL_L10"/>
    <property type="match status" value="1"/>
</dbReference>
<organism>
    <name type="scientific">Synechococcus elongatus (strain ATCC 33912 / PCC 7942 / FACHB-805)</name>
    <name type="common">Anacystis nidulans R2</name>
    <dbReference type="NCBI Taxonomy" id="1140"/>
    <lineage>
        <taxon>Bacteria</taxon>
        <taxon>Bacillati</taxon>
        <taxon>Cyanobacteriota</taxon>
        <taxon>Cyanophyceae</taxon>
        <taxon>Synechococcales</taxon>
        <taxon>Synechococcaceae</taxon>
        <taxon>Synechococcus</taxon>
    </lineage>
</organism>
<name>RL10_SYNE7</name>
<proteinExistence type="inferred from homology"/>
<sequence>MGRTLANKQDIVTELKGLVDEAQMAFVVDYQGLTVAEITDLRNRLEASNSVCKVTKNTLMRRAIADADDWQPLTELLKGTNAFVLVKDDPGSAIKAYQAFQKDTKKTELRGGLLEGRLLSSDELKAIGDLPSKEVLIAQIAGAINGVATKLAVGIKEVPNSLARGIKAVSEQTDA</sequence>